<feature type="chain" id="PRO_0000096484" description="Septin ring organizing protein mid2">
    <location>
        <begin position="1"/>
        <end position="706"/>
    </location>
</feature>
<feature type="domain" description="PH" evidence="1">
    <location>
        <begin position="583"/>
        <end position="688"/>
    </location>
</feature>
<feature type="region of interest" description="Disordered" evidence="2">
    <location>
        <begin position="62"/>
        <end position="102"/>
    </location>
</feature>
<feature type="region of interest" description="Disordered" evidence="2">
    <location>
        <begin position="145"/>
        <end position="180"/>
    </location>
</feature>
<feature type="compositionally biased region" description="Polar residues" evidence="2">
    <location>
        <begin position="81"/>
        <end position="90"/>
    </location>
</feature>
<feature type="compositionally biased region" description="Polar residues" evidence="2">
    <location>
        <begin position="149"/>
        <end position="169"/>
    </location>
</feature>
<feature type="modified residue" description="Phosphoserine" evidence="8">
    <location>
        <position position="379"/>
    </location>
</feature>
<dbReference type="EMBL" id="CU329670">
    <property type="protein sequence ID" value="CAB66312.2"/>
    <property type="molecule type" value="Genomic_DNA"/>
</dbReference>
<dbReference type="EMBL" id="AF237418">
    <property type="protein sequence ID" value="AAL55661.1"/>
    <property type="molecule type" value="Genomic_DNA"/>
</dbReference>
<dbReference type="PIR" id="T50303">
    <property type="entry name" value="T50303"/>
</dbReference>
<dbReference type="RefSeq" id="NP_594704.2">
    <property type="nucleotide sequence ID" value="NM_001020131.2"/>
</dbReference>
<dbReference type="SMR" id="Q9P7Y8"/>
<dbReference type="BioGRID" id="279136">
    <property type="interactions" value="15"/>
</dbReference>
<dbReference type="STRING" id="284812.Q9P7Y8"/>
<dbReference type="iPTMnet" id="Q9P7Y8"/>
<dbReference type="PaxDb" id="4896-SPAPYUG7.03c.1"/>
<dbReference type="EnsemblFungi" id="SPAPYUG7.03c.1">
    <property type="protein sequence ID" value="SPAPYUG7.03c.1:pep"/>
    <property type="gene ID" value="SPAPYUG7.03c"/>
</dbReference>
<dbReference type="GeneID" id="2542683"/>
<dbReference type="KEGG" id="spo:2542683"/>
<dbReference type="PomBase" id="SPAPYUG7.03c">
    <property type="gene designation" value="mid2"/>
</dbReference>
<dbReference type="VEuPathDB" id="FungiDB:SPAPYUG7.03c"/>
<dbReference type="eggNOG" id="ENOG502REBM">
    <property type="taxonomic scope" value="Eukaryota"/>
</dbReference>
<dbReference type="HOGENOM" id="CLU_393377_0_0_1"/>
<dbReference type="InParanoid" id="Q9P7Y8"/>
<dbReference type="OMA" id="DDNHYSD"/>
<dbReference type="PRO" id="PR:Q9P7Y8"/>
<dbReference type="Proteomes" id="UP000002485">
    <property type="component" value="Chromosome I"/>
</dbReference>
<dbReference type="GO" id="GO:0032153">
    <property type="term" value="C:cell division site"/>
    <property type="evidence" value="ECO:0007005"/>
    <property type="project" value="PomBase"/>
</dbReference>
<dbReference type="GO" id="GO:0005737">
    <property type="term" value="C:cytoplasm"/>
    <property type="evidence" value="ECO:0007005"/>
    <property type="project" value="PomBase"/>
</dbReference>
<dbReference type="GO" id="GO:0005829">
    <property type="term" value="C:cytosol"/>
    <property type="evidence" value="ECO:0007005"/>
    <property type="project" value="PomBase"/>
</dbReference>
<dbReference type="GO" id="GO:0031097">
    <property type="term" value="C:medial cortex"/>
    <property type="evidence" value="ECO:0000314"/>
    <property type="project" value="PomBase"/>
</dbReference>
<dbReference type="GO" id="GO:0036391">
    <property type="term" value="C:medial cortex septin ring"/>
    <property type="evidence" value="ECO:0000314"/>
    <property type="project" value="PomBase"/>
</dbReference>
<dbReference type="GO" id="GO:0032176">
    <property type="term" value="C:split septin rings"/>
    <property type="evidence" value="ECO:0000314"/>
    <property type="project" value="PomBase"/>
</dbReference>
<dbReference type="GO" id="GO:0005525">
    <property type="term" value="F:GTP binding"/>
    <property type="evidence" value="ECO:0000318"/>
    <property type="project" value="GO_Central"/>
</dbReference>
<dbReference type="GO" id="GO:0005546">
    <property type="term" value="F:phosphatidylinositol-4,5-bisphosphate binding"/>
    <property type="evidence" value="ECO:0000304"/>
    <property type="project" value="PomBase"/>
</dbReference>
<dbReference type="GO" id="GO:0051301">
    <property type="term" value="P:cell division"/>
    <property type="evidence" value="ECO:0007669"/>
    <property type="project" value="UniProtKB-KW"/>
</dbReference>
<dbReference type="GO" id="GO:0031106">
    <property type="term" value="P:septin ring organization"/>
    <property type="evidence" value="ECO:0000314"/>
    <property type="project" value="PomBase"/>
</dbReference>
<dbReference type="CDD" id="cd13278">
    <property type="entry name" value="PH_Bud4"/>
    <property type="match status" value="1"/>
</dbReference>
<dbReference type="Gene3D" id="2.30.29.30">
    <property type="entry name" value="Pleckstrin-homology domain (PH domain)/Phosphotyrosine-binding domain (PTB)"/>
    <property type="match status" value="1"/>
</dbReference>
<dbReference type="InterPro" id="IPR052007">
    <property type="entry name" value="Bud4"/>
</dbReference>
<dbReference type="InterPro" id="IPR011993">
    <property type="entry name" value="PH-like_dom_sf"/>
</dbReference>
<dbReference type="InterPro" id="IPR001849">
    <property type="entry name" value="PH_domain"/>
</dbReference>
<dbReference type="PANTHER" id="PTHR36100">
    <property type="entry name" value="BUD SITE SELECTION PROTEIN 4"/>
    <property type="match status" value="1"/>
</dbReference>
<dbReference type="PANTHER" id="PTHR36100:SF1">
    <property type="entry name" value="BUD SITE SELECTION PROTEIN 4"/>
    <property type="match status" value="1"/>
</dbReference>
<dbReference type="Pfam" id="PF00169">
    <property type="entry name" value="PH"/>
    <property type="match status" value="1"/>
</dbReference>
<dbReference type="SMART" id="SM00233">
    <property type="entry name" value="PH"/>
    <property type="match status" value="1"/>
</dbReference>
<dbReference type="SUPFAM" id="SSF50729">
    <property type="entry name" value="PH domain-like"/>
    <property type="match status" value="1"/>
</dbReference>
<dbReference type="PROSITE" id="PS50003">
    <property type="entry name" value="PH_DOMAIN"/>
    <property type="match status" value="1"/>
</dbReference>
<organism>
    <name type="scientific">Schizosaccharomyces pombe (strain 972 / ATCC 24843)</name>
    <name type="common">Fission yeast</name>
    <dbReference type="NCBI Taxonomy" id="284812"/>
    <lineage>
        <taxon>Eukaryota</taxon>
        <taxon>Fungi</taxon>
        <taxon>Dikarya</taxon>
        <taxon>Ascomycota</taxon>
        <taxon>Taphrinomycotina</taxon>
        <taxon>Schizosaccharomycetes</taxon>
        <taxon>Schizosaccharomycetales</taxon>
        <taxon>Schizosaccharomycetaceae</taxon>
        <taxon>Schizosaccharomyces</taxon>
    </lineage>
</organism>
<comment type="function">
    <text evidence="3 4 6">Responsible for the proper stability and function of septins during cytokinesis. Required for the correct formation of the medial septin ring structure in mitosis and for the proper localization of endo-glucanases agn1 and eng1, which are needed for efficient cell separation. May act as a landmark for the localization of hydrolytic proteins to the medial region.</text>
</comment>
<comment type="subcellular location">
    <subcellularLocation>
        <location evidence="3">Cytoplasm</location>
        <location evidence="3">Cell cortex</location>
    </subcellularLocation>
    <subcellularLocation>
        <location evidence="4">Cytoplasm</location>
        <location evidence="4">Cytoskeleton</location>
    </subcellularLocation>
    <text>Localizes to the medial ring at the cell cortex of dividing cells (PubMed:12654901). Initially forms a single ring, which subsequently splits into two distinct rings as the septum forms, and disappears as cells separate (PubMed:12654901). Requires septins for proper localization (PubMed:12654901).</text>
</comment>
<comment type="induction">
    <text evidence="5 7">Cell cycle-regulated with a peak during septation (at protein level). Induced by transcription factor ace2 during mitosis. Degraded via SCF-dependent proteolysis.</text>
</comment>
<comment type="similarity">
    <text evidence="9">Belongs to the BUD4 family.</text>
</comment>
<accession>Q9P7Y8</accession>
<accession>Q8X1T2</accession>
<keyword id="KW-0131">Cell cycle</keyword>
<keyword id="KW-0132">Cell division</keyword>
<keyword id="KW-0963">Cytoplasm</keyword>
<keyword id="KW-0206">Cytoskeleton</keyword>
<keyword id="KW-0498">Mitosis</keyword>
<keyword id="KW-0597">Phosphoprotein</keyword>
<keyword id="KW-1185">Reference proteome</keyword>
<sequence length="706" mass="78961">MLMTASQQDQHAKMYLADIHRALRIPSPIPSTDYECSDYASTIASISRESTMRNFNRSNISSTAPSFAESEDAEDGDSFPYDQTLSNSSSFDDHQSLLPFSTEVRRTPTYSVMNETDSSSTSVEDVNKENILSLNDSCLIKLSDDEASNKSSRSSTPRNSIKSNSSNQGHGDIPIPKKNPARSVCNSKLFNEDTLPAEFEEVSISPPVKLELPTHSHNSSDTSFTNSIVSSVSDMVGLGEGINSIASFGFSEDSSSFQDIKTPPRLSFADENRENCRTDIYRSDSIHEYEEPLTSSITSLDSPHVLDENAPIPLLPKVVSLPDPRFTNVLSAFDALTRTYLLRQNSKVVHATSQKQEMQTSRRVVNSCYMPESLSRNLSSSLQQTGGSGRLFVRLMEIRNLTIPLASGMTTRFTYTISGKHIQVPWNALHSTTKIENEYTFDESISSSIVCTLRAAYDPPKVRTRSTLGKVFSTNKRKSMTTDPVSEALHGFVSEDGTFGEVTINTDSVSRTALGRCQSMVLPIMNKWTVDPAAKDVKPLPRKVGELEIHVFFLPALPVSLKELPASIESAMYDLKLAEWDRTLLCDGYLCQQGGDCPYWRRRYFQLIGSKLVAFQQFSKVRRATIDLSEATHIVDDNHYSDEEELEGYLYFESGFRIIFSNGDYIDFYAETVGEKDEWMSTLRQHLGQCSMVHKNWTKSFLSLSF</sequence>
<reference key="1">
    <citation type="journal article" date="2002" name="Nature">
        <title>The genome sequence of Schizosaccharomyces pombe.</title>
        <authorList>
            <person name="Wood V."/>
            <person name="Gwilliam R."/>
            <person name="Rajandream M.A."/>
            <person name="Lyne M.H."/>
            <person name="Lyne R."/>
            <person name="Stewart A."/>
            <person name="Sgouros J.G."/>
            <person name="Peat N."/>
            <person name="Hayles J."/>
            <person name="Baker S.G."/>
            <person name="Basham D."/>
            <person name="Bowman S."/>
            <person name="Brooks K."/>
            <person name="Brown D."/>
            <person name="Brown S."/>
            <person name="Chillingworth T."/>
            <person name="Churcher C.M."/>
            <person name="Collins M."/>
            <person name="Connor R."/>
            <person name="Cronin A."/>
            <person name="Davis P."/>
            <person name="Feltwell T."/>
            <person name="Fraser A."/>
            <person name="Gentles S."/>
            <person name="Goble A."/>
            <person name="Hamlin N."/>
            <person name="Harris D.E."/>
            <person name="Hidalgo J."/>
            <person name="Hodgson G."/>
            <person name="Holroyd S."/>
            <person name="Hornsby T."/>
            <person name="Howarth S."/>
            <person name="Huckle E.J."/>
            <person name="Hunt S."/>
            <person name="Jagels K."/>
            <person name="James K.D."/>
            <person name="Jones L."/>
            <person name="Jones M."/>
            <person name="Leather S."/>
            <person name="McDonald S."/>
            <person name="McLean J."/>
            <person name="Mooney P."/>
            <person name="Moule S."/>
            <person name="Mungall K.L."/>
            <person name="Murphy L.D."/>
            <person name="Niblett D."/>
            <person name="Odell C."/>
            <person name="Oliver K."/>
            <person name="O'Neil S."/>
            <person name="Pearson D."/>
            <person name="Quail M.A."/>
            <person name="Rabbinowitsch E."/>
            <person name="Rutherford K.M."/>
            <person name="Rutter S."/>
            <person name="Saunders D."/>
            <person name="Seeger K."/>
            <person name="Sharp S."/>
            <person name="Skelton J."/>
            <person name="Simmonds M.N."/>
            <person name="Squares R."/>
            <person name="Squares S."/>
            <person name="Stevens K."/>
            <person name="Taylor K."/>
            <person name="Taylor R.G."/>
            <person name="Tivey A."/>
            <person name="Walsh S.V."/>
            <person name="Warren T."/>
            <person name="Whitehead S."/>
            <person name="Woodward J.R."/>
            <person name="Volckaert G."/>
            <person name="Aert R."/>
            <person name="Robben J."/>
            <person name="Grymonprez B."/>
            <person name="Weltjens I."/>
            <person name="Vanstreels E."/>
            <person name="Rieger M."/>
            <person name="Schaefer M."/>
            <person name="Mueller-Auer S."/>
            <person name="Gabel C."/>
            <person name="Fuchs M."/>
            <person name="Duesterhoeft A."/>
            <person name="Fritzc C."/>
            <person name="Holzer E."/>
            <person name="Moestl D."/>
            <person name="Hilbert H."/>
            <person name="Borzym K."/>
            <person name="Langer I."/>
            <person name="Beck A."/>
            <person name="Lehrach H."/>
            <person name="Reinhardt R."/>
            <person name="Pohl T.M."/>
            <person name="Eger P."/>
            <person name="Zimmermann W."/>
            <person name="Wedler H."/>
            <person name="Wambutt R."/>
            <person name="Purnelle B."/>
            <person name="Goffeau A."/>
            <person name="Cadieu E."/>
            <person name="Dreano S."/>
            <person name="Gloux S."/>
            <person name="Lelaure V."/>
            <person name="Mottier S."/>
            <person name="Galibert F."/>
            <person name="Aves S.J."/>
            <person name="Xiang Z."/>
            <person name="Hunt C."/>
            <person name="Moore K."/>
            <person name="Hurst S.M."/>
            <person name="Lucas M."/>
            <person name="Rochet M."/>
            <person name="Gaillardin C."/>
            <person name="Tallada V.A."/>
            <person name="Garzon A."/>
            <person name="Thode G."/>
            <person name="Daga R.R."/>
            <person name="Cruzado L."/>
            <person name="Jimenez J."/>
            <person name="Sanchez M."/>
            <person name="del Rey F."/>
            <person name="Benito J."/>
            <person name="Dominguez A."/>
            <person name="Revuelta J.L."/>
            <person name="Moreno S."/>
            <person name="Armstrong J."/>
            <person name="Forsburg S.L."/>
            <person name="Cerutti L."/>
            <person name="Lowe T."/>
            <person name="McCombie W.R."/>
            <person name="Paulsen I."/>
            <person name="Potashkin J."/>
            <person name="Shpakovski G.V."/>
            <person name="Ussery D."/>
            <person name="Barrell B.G."/>
            <person name="Nurse P."/>
        </authorList>
    </citation>
    <scope>NUCLEOTIDE SEQUENCE [LARGE SCALE GENOMIC DNA]</scope>
    <source>
        <strain>972 / ATCC 24843</strain>
    </source>
</reference>
<reference key="2">
    <citation type="journal article" date="2011" name="Science">
        <title>Comparative functional genomics of the fission yeasts.</title>
        <authorList>
            <person name="Rhind N."/>
            <person name="Chen Z."/>
            <person name="Yassour M."/>
            <person name="Thompson D.A."/>
            <person name="Haas B.J."/>
            <person name="Habib N."/>
            <person name="Wapinski I."/>
            <person name="Roy S."/>
            <person name="Lin M.F."/>
            <person name="Heiman D.I."/>
            <person name="Young S.K."/>
            <person name="Furuya K."/>
            <person name="Guo Y."/>
            <person name="Pidoux A."/>
            <person name="Chen H.M."/>
            <person name="Robbertse B."/>
            <person name="Goldberg J.M."/>
            <person name="Aoki K."/>
            <person name="Bayne E.H."/>
            <person name="Berlin A.M."/>
            <person name="Desjardins C.A."/>
            <person name="Dobbs E."/>
            <person name="Dukaj L."/>
            <person name="Fan L."/>
            <person name="FitzGerald M.G."/>
            <person name="French C."/>
            <person name="Gujja S."/>
            <person name="Hansen K."/>
            <person name="Keifenheim D."/>
            <person name="Levin J.Z."/>
            <person name="Mosher R.A."/>
            <person name="Mueller C.A."/>
            <person name="Pfiffner J."/>
            <person name="Priest M."/>
            <person name="Russ C."/>
            <person name="Smialowska A."/>
            <person name="Swoboda P."/>
            <person name="Sykes S.M."/>
            <person name="Vaughn M."/>
            <person name="Vengrova S."/>
            <person name="Yoder R."/>
            <person name="Zeng Q."/>
            <person name="Allshire R."/>
            <person name="Baulcombe D."/>
            <person name="Birren B.W."/>
            <person name="Brown W."/>
            <person name="Ekwall K."/>
            <person name="Kellis M."/>
            <person name="Leatherwood J."/>
            <person name="Levin H."/>
            <person name="Margalit H."/>
            <person name="Martienssen R."/>
            <person name="Nieduszynski C.A."/>
            <person name="Spatafora J.W."/>
            <person name="Friedman N."/>
            <person name="Dalgaard J.Z."/>
            <person name="Baumann P."/>
            <person name="Niki H."/>
            <person name="Regev A."/>
            <person name="Nusbaum C."/>
        </authorList>
    </citation>
    <scope>REVISION OF GENE MODEL</scope>
</reference>
<reference key="3">
    <citation type="journal article" date="2000" name="Bioorg. Khim.">
        <title>Chromosomal localization of the rpb9+ and tfa1+ genes encoding components of the mRNA synthesis machinery of Schizosaccharomyces pombe.</title>
        <authorList>
            <person name="Shpakovski G.V."/>
            <person name="Baranova G.M."/>
        </authorList>
    </citation>
    <scope>NUCLEOTIDE SEQUENCE [GENOMIC DNA] OF 1-143</scope>
    <source>
        <strain>972 / ATCC 24843</strain>
    </source>
</reference>
<reference key="4">
    <citation type="journal article" date="2003" name="J. Cell Biol.">
        <title>Mid2p stabilizes septin rings during cytokinesis in fission yeast.</title>
        <authorList>
            <person name="Berlin A."/>
            <person name="Paoletti A."/>
            <person name="Chang F."/>
        </authorList>
    </citation>
    <scope>FUNCTION</scope>
    <scope>SUBCELLULAR LOCATION</scope>
</reference>
<reference key="5">
    <citation type="journal article" date="2003" name="J. Cell Biol.">
        <title>An anillin homologue, Mid2p, acts during fission yeast cytokinesis to organize the septin ring and promote cell separation.</title>
        <authorList>
            <person name="Tasto J.J."/>
            <person name="Morrell J.L."/>
            <person name="Gould K.L."/>
        </authorList>
    </citation>
    <scope>FUNCTION</scope>
    <scope>SUBCELLULAR LOCATION</scope>
    <scope>PHOSPHORYLATION</scope>
</reference>
<reference key="6">
    <citation type="journal article" date="2005" name="J. Cell Sci.">
        <title>Ace2p contributes to fission yeast septin ring assembly by regulating mid2+ expression.</title>
        <authorList>
            <person name="Petit C.S."/>
            <person name="Mehta S."/>
            <person name="Roberts R.H."/>
            <person name="Gould K.L."/>
        </authorList>
    </citation>
    <scope>INDUCTION BY ACE2</scope>
</reference>
<reference key="7">
    <citation type="journal article" date="2005" name="Mol. Biol. Cell">
        <title>Ace2p controls the expression of genes required for cell separation in Schizosaccharomyces pombe.</title>
        <authorList>
            <person name="Alonso-Nunez M.L."/>
            <person name="An H."/>
            <person name="Martin-Cuadrado A.B."/>
            <person name="Mehta S."/>
            <person name="Petit C.S."/>
            <person name="Sipiczki M."/>
            <person name="del Rey F."/>
            <person name="Gould K.L."/>
            <person name="Vazquez de Aldana C.R."/>
        </authorList>
    </citation>
    <scope>INDUCTION BY ACE2</scope>
</reference>
<reference key="8">
    <citation type="journal article" date="2005" name="Mol. Biol. Cell">
        <title>Role of septins and the exocyst complex in the function of hydrolytic enzymes responsible for fission yeast cell separation.</title>
        <authorList>
            <person name="Martin-Cuadrado A.B."/>
            <person name="Morrell J.L."/>
            <person name="Konomi M."/>
            <person name="An H."/>
            <person name="Petit C.S."/>
            <person name="Osumi M."/>
            <person name="Balasubramanian M."/>
            <person name="Gould K.L."/>
            <person name="Del Rey F."/>
            <person name="Vazquez de Aldana C.R."/>
        </authorList>
    </citation>
    <scope>FUNCTION</scope>
</reference>
<reference key="9">
    <citation type="journal article" date="2008" name="J. Proteome Res.">
        <title>Phosphoproteome analysis of fission yeast.</title>
        <authorList>
            <person name="Wilson-Grady J.T."/>
            <person name="Villen J."/>
            <person name="Gygi S.P."/>
        </authorList>
    </citation>
    <scope>PHOSPHORYLATION [LARGE SCALE ANALYSIS] AT SER-379</scope>
    <scope>IDENTIFICATION BY MASS SPECTROMETRY</scope>
</reference>
<evidence type="ECO:0000255" key="1">
    <source>
        <dbReference type="PROSITE-ProRule" id="PRU00145"/>
    </source>
</evidence>
<evidence type="ECO:0000256" key="2">
    <source>
        <dbReference type="SAM" id="MobiDB-lite"/>
    </source>
</evidence>
<evidence type="ECO:0000269" key="3">
    <source>
    </source>
</evidence>
<evidence type="ECO:0000269" key="4">
    <source>
    </source>
</evidence>
<evidence type="ECO:0000269" key="5">
    <source>
    </source>
</evidence>
<evidence type="ECO:0000269" key="6">
    <source>
    </source>
</evidence>
<evidence type="ECO:0000269" key="7">
    <source>
    </source>
</evidence>
<evidence type="ECO:0000269" key="8">
    <source>
    </source>
</evidence>
<evidence type="ECO:0000305" key="9"/>
<gene>
    <name type="primary">mid2</name>
    <name type="synonym">bud4</name>
    <name type="ORF">SPAPYUG7.03c</name>
</gene>
<protein>
    <recommendedName>
        <fullName>Septin ring organizing protein mid2</fullName>
    </recommendedName>
</protein>
<proteinExistence type="evidence at protein level"/>
<name>MID2_SCHPO</name>